<proteinExistence type="inferred from homology"/>
<dbReference type="EC" id="2.5.1.19" evidence="1"/>
<dbReference type="EMBL" id="X54545">
    <property type="protein sequence ID" value="CAA38417.1"/>
    <property type="molecule type" value="Genomic_DNA"/>
</dbReference>
<dbReference type="EMBL" id="AL513382">
    <property type="protein sequence ID" value="CAD05378.1"/>
    <property type="molecule type" value="Genomic_DNA"/>
</dbReference>
<dbReference type="EMBL" id="AE014613">
    <property type="protein sequence ID" value="AAO69570.1"/>
    <property type="molecule type" value="Genomic_DNA"/>
</dbReference>
<dbReference type="PIR" id="S12096">
    <property type="entry name" value="S12096"/>
</dbReference>
<dbReference type="RefSeq" id="NP_455465.1">
    <property type="nucleotide sequence ID" value="NC_003198.1"/>
</dbReference>
<dbReference type="RefSeq" id="WP_000445205.1">
    <property type="nucleotide sequence ID" value="NZ_WSUR01000013.1"/>
</dbReference>
<dbReference type="SMR" id="P19786"/>
<dbReference type="STRING" id="220341.gene:17584969"/>
<dbReference type="KEGG" id="stt:t1956"/>
<dbReference type="KEGG" id="sty:STY0978"/>
<dbReference type="PATRIC" id="fig|220341.7.peg.987"/>
<dbReference type="eggNOG" id="COG0128">
    <property type="taxonomic scope" value="Bacteria"/>
</dbReference>
<dbReference type="HOGENOM" id="CLU_024321_0_0_6"/>
<dbReference type="OMA" id="YEDHRMA"/>
<dbReference type="OrthoDB" id="9809920at2"/>
<dbReference type="UniPathway" id="UPA00053">
    <property type="reaction ID" value="UER00089"/>
</dbReference>
<dbReference type="PHI-base" id="PHI:9459"/>
<dbReference type="Proteomes" id="UP000000541">
    <property type="component" value="Chromosome"/>
</dbReference>
<dbReference type="Proteomes" id="UP000002670">
    <property type="component" value="Chromosome"/>
</dbReference>
<dbReference type="GO" id="GO:0005737">
    <property type="term" value="C:cytoplasm"/>
    <property type="evidence" value="ECO:0007669"/>
    <property type="project" value="UniProtKB-SubCell"/>
</dbReference>
<dbReference type="GO" id="GO:0003866">
    <property type="term" value="F:3-phosphoshikimate 1-carboxyvinyltransferase activity"/>
    <property type="evidence" value="ECO:0007669"/>
    <property type="project" value="UniProtKB-UniRule"/>
</dbReference>
<dbReference type="GO" id="GO:0008652">
    <property type="term" value="P:amino acid biosynthetic process"/>
    <property type="evidence" value="ECO:0007669"/>
    <property type="project" value="UniProtKB-KW"/>
</dbReference>
<dbReference type="GO" id="GO:0009073">
    <property type="term" value="P:aromatic amino acid family biosynthetic process"/>
    <property type="evidence" value="ECO:0007669"/>
    <property type="project" value="UniProtKB-KW"/>
</dbReference>
<dbReference type="GO" id="GO:0009423">
    <property type="term" value="P:chorismate biosynthetic process"/>
    <property type="evidence" value="ECO:0007669"/>
    <property type="project" value="UniProtKB-UniRule"/>
</dbReference>
<dbReference type="FunFam" id="3.65.10.10:FF:000003">
    <property type="entry name" value="3-phosphoshikimate 1-carboxyvinyltransferase"/>
    <property type="match status" value="1"/>
</dbReference>
<dbReference type="FunFam" id="3.65.10.10:FF:000004">
    <property type="entry name" value="3-phosphoshikimate 1-carboxyvinyltransferase"/>
    <property type="match status" value="1"/>
</dbReference>
<dbReference type="Gene3D" id="3.65.10.10">
    <property type="entry name" value="Enolpyruvate transferase domain"/>
    <property type="match status" value="2"/>
</dbReference>
<dbReference type="HAMAP" id="MF_00210">
    <property type="entry name" value="EPSP_synth"/>
    <property type="match status" value="1"/>
</dbReference>
<dbReference type="InterPro" id="IPR001986">
    <property type="entry name" value="Enolpyruvate_Tfrase_dom"/>
</dbReference>
<dbReference type="InterPro" id="IPR036968">
    <property type="entry name" value="Enolpyruvate_Tfrase_sf"/>
</dbReference>
<dbReference type="InterPro" id="IPR006264">
    <property type="entry name" value="EPSP_synthase"/>
</dbReference>
<dbReference type="InterPro" id="IPR023193">
    <property type="entry name" value="EPSP_synthase_CS"/>
</dbReference>
<dbReference type="InterPro" id="IPR013792">
    <property type="entry name" value="RNA3'P_cycl/enolpyr_Trfase_a/b"/>
</dbReference>
<dbReference type="NCBIfam" id="TIGR01356">
    <property type="entry name" value="aroA"/>
    <property type="match status" value="1"/>
</dbReference>
<dbReference type="PANTHER" id="PTHR21090">
    <property type="entry name" value="AROM/DEHYDROQUINATE SYNTHASE"/>
    <property type="match status" value="1"/>
</dbReference>
<dbReference type="PANTHER" id="PTHR21090:SF5">
    <property type="entry name" value="PENTAFUNCTIONAL AROM POLYPEPTIDE"/>
    <property type="match status" value="1"/>
</dbReference>
<dbReference type="Pfam" id="PF00275">
    <property type="entry name" value="EPSP_synthase"/>
    <property type="match status" value="1"/>
</dbReference>
<dbReference type="PIRSF" id="PIRSF000505">
    <property type="entry name" value="EPSPS"/>
    <property type="match status" value="1"/>
</dbReference>
<dbReference type="SUPFAM" id="SSF55205">
    <property type="entry name" value="EPT/RTPC-like"/>
    <property type="match status" value="1"/>
</dbReference>
<dbReference type="PROSITE" id="PS00104">
    <property type="entry name" value="EPSP_SYNTHASE_1"/>
    <property type="match status" value="1"/>
</dbReference>
<dbReference type="PROSITE" id="PS00885">
    <property type="entry name" value="EPSP_SYNTHASE_2"/>
    <property type="match status" value="1"/>
</dbReference>
<organism>
    <name type="scientific">Salmonella typhi</name>
    <dbReference type="NCBI Taxonomy" id="90370"/>
    <lineage>
        <taxon>Bacteria</taxon>
        <taxon>Pseudomonadati</taxon>
        <taxon>Pseudomonadota</taxon>
        <taxon>Gammaproteobacteria</taxon>
        <taxon>Enterobacterales</taxon>
        <taxon>Enterobacteriaceae</taxon>
        <taxon>Salmonella</taxon>
    </lineage>
</organism>
<keyword id="KW-0028">Amino-acid biosynthesis</keyword>
<keyword id="KW-0057">Aromatic amino acid biosynthesis</keyword>
<keyword id="KW-0963">Cytoplasm</keyword>
<keyword id="KW-0808">Transferase</keyword>
<comment type="function">
    <text evidence="1">Catalyzes the transfer of the enolpyruvyl moiety of phosphoenolpyruvate (PEP) to the 5-hydroxyl of shikimate-3-phosphate (S3P) to produce enolpyruvyl shikimate-3-phosphate and inorganic phosphate.</text>
</comment>
<comment type="catalytic activity">
    <reaction evidence="1">
        <text>3-phosphoshikimate + phosphoenolpyruvate = 5-O-(1-carboxyvinyl)-3-phosphoshikimate + phosphate</text>
        <dbReference type="Rhea" id="RHEA:21256"/>
        <dbReference type="ChEBI" id="CHEBI:43474"/>
        <dbReference type="ChEBI" id="CHEBI:57701"/>
        <dbReference type="ChEBI" id="CHEBI:58702"/>
        <dbReference type="ChEBI" id="CHEBI:145989"/>
        <dbReference type="EC" id="2.5.1.19"/>
    </reaction>
    <physiologicalReaction direction="left-to-right" evidence="1">
        <dbReference type="Rhea" id="RHEA:21257"/>
    </physiologicalReaction>
</comment>
<comment type="pathway">
    <text evidence="1">Metabolic intermediate biosynthesis; chorismate biosynthesis; chorismate from D-erythrose 4-phosphate and phosphoenolpyruvate: step 6/7.</text>
</comment>
<comment type="subunit">
    <text evidence="1">Monomer.</text>
</comment>
<comment type="subcellular location">
    <subcellularLocation>
        <location evidence="1">Cytoplasm</location>
    </subcellularLocation>
</comment>
<comment type="similarity">
    <text evidence="1 2">Belongs to the EPSP synthase family.</text>
</comment>
<reference key="1">
    <citation type="journal article" date="1990" name="Nucleic Acids Res.">
        <title>Complete nucleotide sequence of the aroA gene from Salmonella typhi encoding 5-enolpyruvylshikimate 3-phosphate synthase.</title>
        <authorList>
            <person name="Chatfield S."/>
            <person name="Dougan G."/>
            <person name="Charles I.G."/>
        </authorList>
    </citation>
    <scope>NUCLEOTIDE SEQUENCE [GENOMIC DNA]</scope>
    <source>
        <strain>ATCC 700931 / Ty2</strain>
    </source>
</reference>
<reference key="2">
    <citation type="journal article" date="2001" name="Nature">
        <title>Complete genome sequence of a multiple drug resistant Salmonella enterica serovar Typhi CT18.</title>
        <authorList>
            <person name="Parkhill J."/>
            <person name="Dougan G."/>
            <person name="James K.D."/>
            <person name="Thomson N.R."/>
            <person name="Pickard D."/>
            <person name="Wain J."/>
            <person name="Churcher C.M."/>
            <person name="Mungall K.L."/>
            <person name="Bentley S.D."/>
            <person name="Holden M.T.G."/>
            <person name="Sebaihia M."/>
            <person name="Baker S."/>
            <person name="Basham D."/>
            <person name="Brooks K."/>
            <person name="Chillingworth T."/>
            <person name="Connerton P."/>
            <person name="Cronin A."/>
            <person name="Davis P."/>
            <person name="Davies R.M."/>
            <person name="Dowd L."/>
            <person name="White N."/>
            <person name="Farrar J."/>
            <person name="Feltwell T."/>
            <person name="Hamlin N."/>
            <person name="Haque A."/>
            <person name="Hien T.T."/>
            <person name="Holroyd S."/>
            <person name="Jagels K."/>
            <person name="Krogh A."/>
            <person name="Larsen T.S."/>
            <person name="Leather S."/>
            <person name="Moule S."/>
            <person name="O'Gaora P."/>
            <person name="Parry C."/>
            <person name="Quail M.A."/>
            <person name="Rutherford K.M."/>
            <person name="Simmonds M."/>
            <person name="Skelton J."/>
            <person name="Stevens K."/>
            <person name="Whitehead S."/>
            <person name="Barrell B.G."/>
        </authorList>
    </citation>
    <scope>NUCLEOTIDE SEQUENCE [LARGE SCALE GENOMIC DNA]</scope>
    <source>
        <strain>CT18</strain>
    </source>
</reference>
<reference key="3">
    <citation type="journal article" date="2003" name="J. Bacteriol.">
        <title>Comparative genomics of Salmonella enterica serovar Typhi strains Ty2 and CT18.</title>
        <authorList>
            <person name="Deng W."/>
            <person name="Liou S.-R."/>
            <person name="Plunkett G. III"/>
            <person name="Mayhew G.F."/>
            <person name="Rose D.J."/>
            <person name="Burland V."/>
            <person name="Kodoyianni V."/>
            <person name="Schwartz D.C."/>
            <person name="Blattner F.R."/>
        </authorList>
    </citation>
    <scope>NUCLEOTIDE SEQUENCE [LARGE SCALE GENOMIC DNA]</scope>
    <source>
        <strain>ATCC 700931 / Ty2</strain>
    </source>
</reference>
<protein>
    <recommendedName>
        <fullName evidence="1">3-phosphoshikimate 1-carboxyvinyltransferase</fullName>
        <ecNumber evidence="1">2.5.1.19</ecNumber>
    </recommendedName>
    <alternativeName>
        <fullName evidence="1">5-enolpyruvylshikimate-3-phosphate synthase</fullName>
        <shortName evidence="1">EPSP synthase</shortName>
        <shortName evidence="1">EPSPS</shortName>
    </alternativeName>
</protein>
<accession>P19786</accession>
<sequence length="427" mass="46219">MESLTLQPIARVDGAINLPGSKSVSNRALLLAALACGKTVLTNLLDSDDVRHMLNALSALGINYTLSADRTRCDITGNGGPLRASGTLELFLGNAGTAMRPLAAALCLGQNEIVLTGEPRMKERPIGHLVDSLRQGGANIDYLEQENYPPLRLRGGFIGGDIEVDGSVSSQFLTALLMTAPLAPEDTIIRVKGELVSKPYIDITLNLMKTFGVEIANHHYQQFVVKGGQQYHSPGRYLVEGDASSASYFLAAGAIKGGTVKVTGIGRKSMQGDIRFADVLEKMGATITWGDDFIACTRGELHAIDMDMNHIPDAAMTIATTALFAKGTTTLRNIYNWRVKETDRLFAMATELRKVGAEVEEGHDYIRITPPAKLQHADIGTYNDHRMAMCFSLVALSDTPVTILDPKCTAKTFPDYFEQLARMSTPA</sequence>
<gene>
    <name evidence="1" type="primary">aroA</name>
    <name type="ordered locus">STY0978</name>
    <name type="ordered locus">t1956</name>
</gene>
<feature type="chain" id="PRO_0000088285" description="3-phosphoshikimate 1-carboxyvinyltransferase">
    <location>
        <begin position="1"/>
        <end position="427"/>
    </location>
</feature>
<feature type="active site" description="Proton acceptor" evidence="1">
    <location>
        <position position="313"/>
    </location>
</feature>
<feature type="binding site" evidence="1">
    <location>
        <position position="22"/>
    </location>
    <ligand>
        <name>3-phosphoshikimate</name>
        <dbReference type="ChEBI" id="CHEBI:145989"/>
    </ligand>
</feature>
<feature type="binding site" evidence="1">
    <location>
        <position position="22"/>
    </location>
    <ligand>
        <name>phosphoenolpyruvate</name>
        <dbReference type="ChEBI" id="CHEBI:58702"/>
    </ligand>
</feature>
<feature type="binding site" evidence="1">
    <location>
        <position position="23"/>
    </location>
    <ligand>
        <name>3-phosphoshikimate</name>
        <dbReference type="ChEBI" id="CHEBI:145989"/>
    </ligand>
</feature>
<feature type="binding site" evidence="1">
    <location>
        <position position="27"/>
    </location>
    <ligand>
        <name>3-phosphoshikimate</name>
        <dbReference type="ChEBI" id="CHEBI:145989"/>
    </ligand>
</feature>
<feature type="binding site" evidence="1">
    <location>
        <position position="96"/>
    </location>
    <ligand>
        <name>phosphoenolpyruvate</name>
        <dbReference type="ChEBI" id="CHEBI:58702"/>
    </ligand>
</feature>
<feature type="binding site" evidence="1">
    <location>
        <position position="124"/>
    </location>
    <ligand>
        <name>phosphoenolpyruvate</name>
        <dbReference type="ChEBI" id="CHEBI:58702"/>
    </ligand>
</feature>
<feature type="binding site" evidence="1">
    <location>
        <position position="169"/>
    </location>
    <ligand>
        <name>3-phosphoshikimate</name>
        <dbReference type="ChEBI" id="CHEBI:145989"/>
    </ligand>
</feature>
<feature type="binding site" evidence="1">
    <location>
        <position position="170"/>
    </location>
    <ligand>
        <name>3-phosphoshikimate</name>
        <dbReference type="ChEBI" id="CHEBI:145989"/>
    </ligand>
</feature>
<feature type="binding site" evidence="1">
    <location>
        <position position="171"/>
    </location>
    <ligand>
        <name>3-phosphoshikimate</name>
        <dbReference type="ChEBI" id="CHEBI:145989"/>
    </ligand>
</feature>
<feature type="binding site" evidence="1">
    <location>
        <position position="171"/>
    </location>
    <ligand>
        <name>phosphoenolpyruvate</name>
        <dbReference type="ChEBI" id="CHEBI:58702"/>
    </ligand>
</feature>
<feature type="binding site" evidence="1">
    <location>
        <position position="197"/>
    </location>
    <ligand>
        <name>3-phosphoshikimate</name>
        <dbReference type="ChEBI" id="CHEBI:145989"/>
    </ligand>
</feature>
<feature type="binding site" evidence="1">
    <location>
        <position position="313"/>
    </location>
    <ligand>
        <name>3-phosphoshikimate</name>
        <dbReference type="ChEBI" id="CHEBI:145989"/>
    </ligand>
</feature>
<feature type="binding site" evidence="1">
    <location>
        <position position="336"/>
    </location>
    <ligand>
        <name>3-phosphoshikimate</name>
        <dbReference type="ChEBI" id="CHEBI:145989"/>
    </ligand>
</feature>
<feature type="binding site" evidence="1">
    <location>
        <position position="340"/>
    </location>
    <ligand>
        <name>3-phosphoshikimate</name>
        <dbReference type="ChEBI" id="CHEBI:145989"/>
    </ligand>
</feature>
<feature type="binding site" evidence="1">
    <location>
        <position position="344"/>
    </location>
    <ligand>
        <name>phosphoenolpyruvate</name>
        <dbReference type="ChEBI" id="CHEBI:58702"/>
    </ligand>
</feature>
<feature type="binding site" evidence="1">
    <location>
        <position position="386"/>
    </location>
    <ligand>
        <name>phosphoenolpyruvate</name>
        <dbReference type="ChEBI" id="CHEBI:58702"/>
    </ligand>
</feature>
<feature type="binding site" evidence="1">
    <location>
        <position position="411"/>
    </location>
    <ligand>
        <name>phosphoenolpyruvate</name>
        <dbReference type="ChEBI" id="CHEBI:58702"/>
    </ligand>
</feature>
<feature type="sequence conflict" description="In Ref. 1; CAA38417." evidence="2" ref="1">
    <original>A</original>
    <variation>G</variation>
    <location>
        <position position="254"/>
    </location>
</feature>
<feature type="sequence conflict" description="In Ref. 1; CAA38417." evidence="2" ref="1">
    <original>R</original>
    <variation>G</variation>
    <location>
        <position position="267"/>
    </location>
</feature>
<feature type="sequence conflict" description="In Ref. 1; CAA38417." evidence="2" ref="1">
    <original>E</original>
    <variation>H</variation>
    <location>
        <position position="281"/>
    </location>
</feature>
<name>AROA_SALTI</name>
<evidence type="ECO:0000255" key="1">
    <source>
        <dbReference type="HAMAP-Rule" id="MF_00210"/>
    </source>
</evidence>
<evidence type="ECO:0000305" key="2"/>